<comment type="function">
    <text>Krueppel is a gap class segmentation protein.</text>
</comment>
<comment type="subcellular location">
    <subcellularLocation>
        <location evidence="2">Nucleus</location>
    </subcellularLocation>
</comment>
<comment type="similarity">
    <text evidence="2">Belongs to the krueppel C2H2-type zinc-finger protein family.</text>
</comment>
<reference key="1">
    <citation type="journal article" date="1992" name="Proc. Natl. Acad. Sci. U.S.A.">
        <title>Evolutionary conservation pattern of zinc-finger domains of Drosophila segmentation genes.</title>
        <authorList>
            <person name="Sommer R.J."/>
            <person name="Retzlaff M."/>
            <person name="Goerlich K."/>
            <person name="Sander K."/>
            <person name="Tautz D."/>
        </authorList>
    </citation>
    <scope>NUCLEOTIDE SEQUENCE [GENOMIC DNA]</scope>
</reference>
<sequence>ERTHTGEKPFKCPECQKRFTRDHHLKTHMRLHTGEKPYHCSHCDRHFVQVANLRRHLRVHTGERPYTCEICKAK</sequence>
<proteinExistence type="inferred from homology"/>
<keyword id="KW-0217">Developmental protein</keyword>
<keyword id="KW-0238">DNA-binding</keyword>
<keyword id="KW-0302">Gap protein</keyword>
<keyword id="KW-0479">Metal-binding</keyword>
<keyword id="KW-0539">Nucleus</keyword>
<keyword id="KW-0677">Repeat</keyword>
<keyword id="KW-0862">Zinc</keyword>
<keyword id="KW-0863">Zinc-finger</keyword>
<feature type="chain" id="PRO_0000047001" description="Protein krueppel">
    <location>
        <begin position="1" status="less than"/>
        <end position="74" status="greater than"/>
    </location>
</feature>
<feature type="zinc finger region" description="C2H2-type 1" evidence="1">
    <location>
        <begin position="1" status="less than"/>
        <end position="4"/>
    </location>
</feature>
<feature type="zinc finger region" description="C2H2-type 2" evidence="1">
    <location>
        <begin position="10"/>
        <end position="32"/>
    </location>
</feature>
<feature type="zinc finger region" description="C2H2-type 3" evidence="1">
    <location>
        <begin position="38"/>
        <end position="60"/>
    </location>
</feature>
<feature type="zinc finger region" description="C2H2-type 4" evidence="1">
    <location>
        <begin position="66"/>
        <end position="74" status="greater than"/>
    </location>
</feature>
<feature type="non-terminal residue">
    <location>
        <position position="1"/>
    </location>
</feature>
<feature type="non-terminal residue">
    <location>
        <position position="74"/>
    </location>
</feature>
<protein>
    <recommendedName>
        <fullName>Protein krueppel</fullName>
    </recommendedName>
</protein>
<accession>Q01792</accession>
<dbReference type="EMBL" id="L01613">
    <property type="protein sequence ID" value="AAA29816.1"/>
    <property type="molecule type" value="Genomic_DNA"/>
</dbReference>
<dbReference type="SMR" id="Q01792"/>
<dbReference type="GO" id="GO:0005634">
    <property type="term" value="C:nucleus"/>
    <property type="evidence" value="ECO:0007669"/>
    <property type="project" value="UniProtKB-SubCell"/>
</dbReference>
<dbReference type="GO" id="GO:0003677">
    <property type="term" value="F:DNA binding"/>
    <property type="evidence" value="ECO:0007669"/>
    <property type="project" value="UniProtKB-KW"/>
</dbReference>
<dbReference type="GO" id="GO:0000981">
    <property type="term" value="F:DNA-binding transcription factor activity, RNA polymerase II-specific"/>
    <property type="evidence" value="ECO:0007669"/>
    <property type="project" value="TreeGrafter"/>
</dbReference>
<dbReference type="GO" id="GO:0008270">
    <property type="term" value="F:zinc ion binding"/>
    <property type="evidence" value="ECO:0007669"/>
    <property type="project" value="UniProtKB-KW"/>
</dbReference>
<dbReference type="GO" id="GO:0035282">
    <property type="term" value="P:segmentation"/>
    <property type="evidence" value="ECO:0007669"/>
    <property type="project" value="UniProtKB-KW"/>
</dbReference>
<dbReference type="FunFam" id="3.30.160.60:FF:002343">
    <property type="entry name" value="Zinc finger protein 33A"/>
    <property type="match status" value="1"/>
</dbReference>
<dbReference type="FunFam" id="3.30.160.60:FF:001954">
    <property type="entry name" value="Zinc finger protein 787"/>
    <property type="match status" value="1"/>
</dbReference>
<dbReference type="Gene3D" id="3.30.160.60">
    <property type="entry name" value="Classic Zinc Finger"/>
    <property type="match status" value="3"/>
</dbReference>
<dbReference type="InterPro" id="IPR036236">
    <property type="entry name" value="Znf_C2H2_sf"/>
</dbReference>
<dbReference type="InterPro" id="IPR013087">
    <property type="entry name" value="Znf_C2H2_type"/>
</dbReference>
<dbReference type="PANTHER" id="PTHR24394:SF29">
    <property type="entry name" value="MYONEURIN"/>
    <property type="match status" value="1"/>
</dbReference>
<dbReference type="PANTHER" id="PTHR24394">
    <property type="entry name" value="ZINC FINGER PROTEIN"/>
    <property type="match status" value="1"/>
</dbReference>
<dbReference type="Pfam" id="PF00096">
    <property type="entry name" value="zf-C2H2"/>
    <property type="match status" value="2"/>
</dbReference>
<dbReference type="SMART" id="SM00355">
    <property type="entry name" value="ZnF_C2H2"/>
    <property type="match status" value="2"/>
</dbReference>
<dbReference type="SUPFAM" id="SSF57667">
    <property type="entry name" value="beta-beta-alpha zinc fingers"/>
    <property type="match status" value="1"/>
</dbReference>
<dbReference type="PROSITE" id="PS00028">
    <property type="entry name" value="ZINC_FINGER_C2H2_1"/>
    <property type="match status" value="2"/>
</dbReference>
<dbReference type="PROSITE" id="PS50157">
    <property type="entry name" value="ZINC_FINGER_C2H2_2"/>
    <property type="match status" value="2"/>
</dbReference>
<name>KRUP_BRACO</name>
<organism>
    <name type="scientific">Bradysia coprophila</name>
    <name type="common">Dark-winged fungus gnat</name>
    <name type="synonym">Sciara coprophila</name>
    <dbReference type="NCBI Taxonomy" id="38358"/>
    <lineage>
        <taxon>Eukaryota</taxon>
        <taxon>Metazoa</taxon>
        <taxon>Ecdysozoa</taxon>
        <taxon>Arthropoda</taxon>
        <taxon>Hexapoda</taxon>
        <taxon>Insecta</taxon>
        <taxon>Pterygota</taxon>
        <taxon>Neoptera</taxon>
        <taxon>Endopterygota</taxon>
        <taxon>Diptera</taxon>
        <taxon>Nematocera</taxon>
        <taxon>Sciaroidea</taxon>
        <taxon>Sciaridae</taxon>
        <taxon>Bradysia</taxon>
    </lineage>
</organism>
<gene>
    <name type="primary">Kr</name>
</gene>
<evidence type="ECO:0000255" key="1">
    <source>
        <dbReference type="PROSITE-ProRule" id="PRU00042"/>
    </source>
</evidence>
<evidence type="ECO:0000305" key="2"/>